<organism>
    <name type="scientific">Maridesulfovibrio salexigens (strain ATCC 14822 / DSM 2638 / NCIMB 8403 / VKM B-1763)</name>
    <name type="common">Desulfovibrio salexigens</name>
    <dbReference type="NCBI Taxonomy" id="526222"/>
    <lineage>
        <taxon>Bacteria</taxon>
        <taxon>Pseudomonadati</taxon>
        <taxon>Thermodesulfobacteriota</taxon>
        <taxon>Desulfovibrionia</taxon>
        <taxon>Desulfovibrionales</taxon>
        <taxon>Desulfovibrionaceae</taxon>
        <taxon>Maridesulfovibrio</taxon>
    </lineage>
</organism>
<keyword id="KW-1185">Reference proteome</keyword>
<reference key="1">
    <citation type="submission" date="2009-06" db="EMBL/GenBank/DDBJ databases">
        <title>Complete sequence of Desulfovibrio salexigens DSM 2638.</title>
        <authorList>
            <consortium name="US DOE Joint Genome Institute"/>
            <person name="Lucas S."/>
            <person name="Copeland A."/>
            <person name="Lapidus A."/>
            <person name="Glavina del Rio T."/>
            <person name="Tice H."/>
            <person name="Bruce D."/>
            <person name="Goodwin L."/>
            <person name="Pitluck S."/>
            <person name="Munk A.C."/>
            <person name="Brettin T."/>
            <person name="Detter J.C."/>
            <person name="Han C."/>
            <person name="Tapia R."/>
            <person name="Larimer F."/>
            <person name="Land M."/>
            <person name="Hauser L."/>
            <person name="Kyrpides N."/>
            <person name="Anderson I."/>
            <person name="Wall J.D."/>
            <person name="Arkin A.P."/>
            <person name="Dehal P."/>
            <person name="Chivian D."/>
            <person name="Giles B."/>
            <person name="Hazen T.C."/>
        </authorList>
    </citation>
    <scope>NUCLEOTIDE SEQUENCE [LARGE SCALE GENOMIC DNA]</scope>
    <source>
        <strain>ATCC 14822 / DSM 2638 / NCIMB 8403 / VKM B-1763</strain>
    </source>
</reference>
<dbReference type="EMBL" id="CP001649">
    <property type="protein sequence ID" value="ACS78258.1"/>
    <property type="molecule type" value="Genomic_DNA"/>
</dbReference>
<dbReference type="RefSeq" id="WP_012765784.1">
    <property type="nucleotide sequence ID" value="NC_012881.1"/>
</dbReference>
<dbReference type="SMR" id="C6BVP4"/>
<dbReference type="KEGG" id="dsa:Desal_0188"/>
<dbReference type="eggNOG" id="COG1489">
    <property type="taxonomic scope" value="Bacteria"/>
</dbReference>
<dbReference type="HOGENOM" id="CLU_052299_2_0_7"/>
<dbReference type="OrthoDB" id="9802365at2"/>
<dbReference type="Proteomes" id="UP000002601">
    <property type="component" value="Chromosome"/>
</dbReference>
<dbReference type="GO" id="GO:0003677">
    <property type="term" value="F:DNA binding"/>
    <property type="evidence" value="ECO:0007669"/>
    <property type="project" value="InterPro"/>
</dbReference>
<dbReference type="CDD" id="cd22359">
    <property type="entry name" value="SfsA-like_bacterial"/>
    <property type="match status" value="1"/>
</dbReference>
<dbReference type="Gene3D" id="2.40.50.580">
    <property type="match status" value="1"/>
</dbReference>
<dbReference type="Gene3D" id="3.40.1350.60">
    <property type="match status" value="1"/>
</dbReference>
<dbReference type="HAMAP" id="MF_00095">
    <property type="entry name" value="SfsA"/>
    <property type="match status" value="1"/>
</dbReference>
<dbReference type="InterPro" id="IPR005224">
    <property type="entry name" value="SfsA"/>
</dbReference>
<dbReference type="InterPro" id="IPR040452">
    <property type="entry name" value="SfsA_C"/>
</dbReference>
<dbReference type="InterPro" id="IPR041465">
    <property type="entry name" value="SfsA_N"/>
</dbReference>
<dbReference type="NCBIfam" id="TIGR00230">
    <property type="entry name" value="sfsA"/>
    <property type="match status" value="1"/>
</dbReference>
<dbReference type="PANTHER" id="PTHR30545">
    <property type="entry name" value="SUGAR FERMENTATION STIMULATION PROTEIN A"/>
    <property type="match status" value="1"/>
</dbReference>
<dbReference type="PANTHER" id="PTHR30545:SF2">
    <property type="entry name" value="SUGAR FERMENTATION STIMULATION PROTEIN A"/>
    <property type="match status" value="1"/>
</dbReference>
<dbReference type="Pfam" id="PF03749">
    <property type="entry name" value="SfsA"/>
    <property type="match status" value="1"/>
</dbReference>
<dbReference type="Pfam" id="PF17746">
    <property type="entry name" value="SfsA_N"/>
    <property type="match status" value="1"/>
</dbReference>
<comment type="similarity">
    <text evidence="1">Belongs to the SfsA family.</text>
</comment>
<feature type="chain" id="PRO_1000202719" description="Sugar fermentation stimulation protein homolog">
    <location>
        <begin position="1"/>
        <end position="239"/>
    </location>
</feature>
<proteinExistence type="inferred from homology"/>
<accession>C6BVP4</accession>
<evidence type="ECO:0000255" key="1">
    <source>
        <dbReference type="HAMAP-Rule" id="MF_00095"/>
    </source>
</evidence>
<protein>
    <recommendedName>
        <fullName evidence="1">Sugar fermentation stimulation protein homolog</fullName>
    </recommendedName>
</protein>
<name>SFSA_MARSD</name>
<sequence length="239" mass="26553">MSEPLIFYPQGCCRAIFIRRYKRFTVEAMLDGEVVGVHTNNTGSMLGLLREGQEIYISPAQNPNRKLKWTLEAVMPFGEMIGVNTSVPNKMLQLAFEAGQLPEAGGYTAIKREAKVGNSRLDGLFTDDSGKLPKLWVECKNVTLVEDDIACFPDAQTERGRKHLVELMDLAAKGDRVALFFFVQRTDGSCFGPADFIDPEYAELFYKALDAGVKCWAYEAVLSERGIGIGRKLPLAACR</sequence>
<gene>
    <name evidence="1" type="primary">sfsA</name>
    <name type="ordered locus">Desal_0188</name>
</gene>